<gene>
    <name evidence="1" type="primary">purL</name>
    <name type="ordered locus">TM_1246</name>
</gene>
<sequence>MKLRYLNILKEKLGREPTFVELQAFSVMWSEHCGYSHTKKYIRRLPKTGFEGNAGVVNLDDYYSVAFKIESHNHPSAIEPYNGAATGVGGIIRDVLAMGARPTAIFDSLHMSRIIDGIIEGIADYGNSIGVPTVGGELRISSLYAHNPLVNVLAAGVVRNDMLVDSKASRPGQVIVIFGGATGRDGIHGASFASEDLTGDKATKLSIQVGDPFAEKMLIEAFLEMVEEGLVEGAQDLGAGGVLSATSELVAKGNLGAIVHLDRVPLREPDMEPWEILISESQERMAVVTSPQKASRILEIARKHLLFGDVVAEVIEEPVYRVMYRNDLVMEVPVQLLANAPEEDIVEYTPGKIPEFKRVEFEEVNAREVFEQYDHMVGTDTVVPPGFGAAVMRIKRDGGYSLVTHSRADLALQDTYWGTLIAVLESVRKTLSVGAEPLAITNCVNYGDPDVDPVGLSAMMTALKNACEFSGVPVASGNASLYNTYQGKPIPPTLVVGMLGKVNPQKVAKPKPSKVFAVGWNDFELEREKELWRAIRKLSEEGAFILSSSQLLTRTHVETFREYGLKIEVKLPEVRPAHQMVLVFSERTPVVDVPVKEIGTLSR</sequence>
<dbReference type="EC" id="6.3.5.3" evidence="1"/>
<dbReference type="EMBL" id="AE000512">
    <property type="protein sequence ID" value="AAD36321.1"/>
    <property type="molecule type" value="Genomic_DNA"/>
</dbReference>
<dbReference type="PIR" id="H72276">
    <property type="entry name" value="H72276"/>
</dbReference>
<dbReference type="RefSeq" id="NP_229051.1">
    <property type="nucleotide sequence ID" value="NC_000853.1"/>
</dbReference>
<dbReference type="RefSeq" id="WP_004080021.1">
    <property type="nucleotide sequence ID" value="NC_000853.1"/>
</dbReference>
<dbReference type="PDB" id="1VK3">
    <property type="method" value="X-ray"/>
    <property type="resolution" value="2.15 A"/>
    <property type="chains" value="A=1-603"/>
</dbReference>
<dbReference type="PDB" id="2HRU">
    <property type="method" value="X-ray"/>
    <property type="resolution" value="2.80 A"/>
    <property type="chains" value="A=1-603"/>
</dbReference>
<dbReference type="PDB" id="2HRY">
    <property type="method" value="X-ray"/>
    <property type="resolution" value="2.80 A"/>
    <property type="chains" value="A=1-603"/>
</dbReference>
<dbReference type="PDB" id="2HS0">
    <property type="method" value="X-ray"/>
    <property type="resolution" value="2.52 A"/>
    <property type="chains" value="A=1-603"/>
</dbReference>
<dbReference type="PDB" id="2HS3">
    <property type="method" value="X-ray"/>
    <property type="resolution" value="2.30 A"/>
    <property type="chains" value="A=1-603"/>
</dbReference>
<dbReference type="PDB" id="2HS4">
    <property type="method" value="X-ray"/>
    <property type="resolution" value="2.70 A"/>
    <property type="chains" value="A=1-603"/>
</dbReference>
<dbReference type="PDB" id="3D54">
    <property type="method" value="X-ray"/>
    <property type="resolution" value="3.50 A"/>
    <property type="chains" value="A/E/I=1-603"/>
</dbReference>
<dbReference type="PDBsum" id="1VK3"/>
<dbReference type="PDBsum" id="2HRU"/>
<dbReference type="PDBsum" id="2HRY"/>
<dbReference type="PDBsum" id="2HS0"/>
<dbReference type="PDBsum" id="2HS3"/>
<dbReference type="PDBsum" id="2HS4"/>
<dbReference type="PDBsum" id="3D54"/>
<dbReference type="SMR" id="Q9X0X3"/>
<dbReference type="FunCoup" id="Q9X0X3">
    <property type="interactions" value="335"/>
</dbReference>
<dbReference type="STRING" id="243274.TM_1246"/>
<dbReference type="PaxDb" id="243274-THEMA_08105"/>
<dbReference type="EnsemblBacteria" id="AAD36321">
    <property type="protein sequence ID" value="AAD36321"/>
    <property type="gene ID" value="TM_1246"/>
</dbReference>
<dbReference type="KEGG" id="tma:TM1246"/>
<dbReference type="KEGG" id="tmw:THMA_1271"/>
<dbReference type="PATRIC" id="fig|243274.19.peg.1249"/>
<dbReference type="eggNOG" id="COG0046">
    <property type="taxonomic scope" value="Bacteria"/>
</dbReference>
<dbReference type="InParanoid" id="Q9X0X3"/>
<dbReference type="OrthoDB" id="9804441at2"/>
<dbReference type="BRENDA" id="6.3.5.3">
    <property type="organism ID" value="6331"/>
</dbReference>
<dbReference type="UniPathway" id="UPA00074">
    <property type="reaction ID" value="UER00128"/>
</dbReference>
<dbReference type="EvolutionaryTrace" id="Q9X0X3"/>
<dbReference type="Proteomes" id="UP000008183">
    <property type="component" value="Chromosome"/>
</dbReference>
<dbReference type="GO" id="GO:0005737">
    <property type="term" value="C:cytoplasm"/>
    <property type="evidence" value="ECO:0007669"/>
    <property type="project" value="UniProtKB-SubCell"/>
</dbReference>
<dbReference type="GO" id="GO:0005524">
    <property type="term" value="F:ATP binding"/>
    <property type="evidence" value="ECO:0000314"/>
    <property type="project" value="UniProtKB"/>
</dbReference>
<dbReference type="GO" id="GO:0000287">
    <property type="term" value="F:magnesium ion binding"/>
    <property type="evidence" value="ECO:0000314"/>
    <property type="project" value="UniProtKB"/>
</dbReference>
<dbReference type="GO" id="GO:0004642">
    <property type="term" value="F:phosphoribosylformylglycinamidine synthase activity"/>
    <property type="evidence" value="ECO:0000314"/>
    <property type="project" value="UniProtKB"/>
</dbReference>
<dbReference type="GO" id="GO:0006189">
    <property type="term" value="P:'de novo' IMP biosynthetic process"/>
    <property type="evidence" value="ECO:0007669"/>
    <property type="project" value="UniProtKB-UniRule"/>
</dbReference>
<dbReference type="GO" id="GO:0006164">
    <property type="term" value="P:purine nucleotide biosynthetic process"/>
    <property type="evidence" value="ECO:0000315"/>
    <property type="project" value="UniProtKB"/>
</dbReference>
<dbReference type="CDD" id="cd02203">
    <property type="entry name" value="PurL_repeat1"/>
    <property type="match status" value="1"/>
</dbReference>
<dbReference type="CDD" id="cd02204">
    <property type="entry name" value="PurL_repeat2"/>
    <property type="match status" value="1"/>
</dbReference>
<dbReference type="FunFam" id="3.30.1330.10:FF:000032">
    <property type="entry name" value="Phosphoribosylformylglycinamidine synthase subunit PurL"/>
    <property type="match status" value="1"/>
</dbReference>
<dbReference type="FunFam" id="3.90.650.10:FF:000009">
    <property type="entry name" value="Phosphoribosylformylglycinamidine synthase subunit PurL"/>
    <property type="match status" value="1"/>
</dbReference>
<dbReference type="Gene3D" id="3.30.70.1670">
    <property type="entry name" value="Formylglycinamide ribonucleotide amidotransferase, C-terminal domain"/>
    <property type="match status" value="1"/>
</dbReference>
<dbReference type="Gene3D" id="3.90.650.10">
    <property type="entry name" value="PurM-like C-terminal domain"/>
    <property type="match status" value="1"/>
</dbReference>
<dbReference type="Gene3D" id="3.30.1330.10">
    <property type="entry name" value="PurM-like, N-terminal domain"/>
    <property type="match status" value="2"/>
</dbReference>
<dbReference type="HAMAP" id="MF_00420">
    <property type="entry name" value="PurL_2"/>
    <property type="match status" value="1"/>
</dbReference>
<dbReference type="InterPro" id="IPR010074">
    <property type="entry name" value="PRibForGlyAmidine_synth_PurL"/>
</dbReference>
<dbReference type="InterPro" id="IPR031652">
    <property type="entry name" value="PurL_C"/>
</dbReference>
<dbReference type="InterPro" id="IPR038411">
    <property type="entry name" value="PurL_C_sf"/>
</dbReference>
<dbReference type="InterPro" id="IPR041609">
    <property type="entry name" value="PurL_linker"/>
</dbReference>
<dbReference type="InterPro" id="IPR010918">
    <property type="entry name" value="PurM-like_C_dom"/>
</dbReference>
<dbReference type="InterPro" id="IPR036676">
    <property type="entry name" value="PurM-like_C_sf"/>
</dbReference>
<dbReference type="InterPro" id="IPR016188">
    <property type="entry name" value="PurM-like_N"/>
</dbReference>
<dbReference type="InterPro" id="IPR036921">
    <property type="entry name" value="PurM-like_N_sf"/>
</dbReference>
<dbReference type="NCBIfam" id="TIGR01736">
    <property type="entry name" value="FGAM_synth_II"/>
    <property type="match status" value="1"/>
</dbReference>
<dbReference type="NCBIfam" id="NF010690">
    <property type="entry name" value="PRK14090.1"/>
    <property type="match status" value="1"/>
</dbReference>
<dbReference type="PANTHER" id="PTHR43555">
    <property type="entry name" value="PHOSPHORIBOSYLFORMYLGLYCINAMIDINE SYNTHASE SUBUNIT PURL"/>
    <property type="match status" value="1"/>
</dbReference>
<dbReference type="PANTHER" id="PTHR43555:SF1">
    <property type="entry name" value="PHOSPHORIBOSYLFORMYLGLYCINAMIDINE SYNTHASE SUBUNIT PURL"/>
    <property type="match status" value="1"/>
</dbReference>
<dbReference type="Pfam" id="PF00586">
    <property type="entry name" value="AIRS"/>
    <property type="match status" value="2"/>
</dbReference>
<dbReference type="Pfam" id="PF02769">
    <property type="entry name" value="AIRS_C"/>
    <property type="match status" value="1"/>
</dbReference>
<dbReference type="Pfam" id="PF18072">
    <property type="entry name" value="FGAR-AT_linker"/>
    <property type="match status" value="1"/>
</dbReference>
<dbReference type="Pfam" id="PF16904">
    <property type="entry name" value="PurL_C"/>
    <property type="match status" value="1"/>
</dbReference>
<dbReference type="SUPFAM" id="SSF56042">
    <property type="entry name" value="PurM C-terminal domain-like"/>
    <property type="match status" value="2"/>
</dbReference>
<dbReference type="SUPFAM" id="SSF55326">
    <property type="entry name" value="PurM N-terminal domain-like"/>
    <property type="match status" value="2"/>
</dbReference>
<keyword id="KW-0002">3D-structure</keyword>
<keyword id="KW-0067">ATP-binding</keyword>
<keyword id="KW-0963">Cytoplasm</keyword>
<keyword id="KW-0436">Ligase</keyword>
<keyword id="KW-0460">Magnesium</keyword>
<keyword id="KW-0479">Metal-binding</keyword>
<keyword id="KW-0547">Nucleotide-binding</keyword>
<keyword id="KW-0658">Purine biosynthesis</keyword>
<keyword id="KW-1185">Reference proteome</keyword>
<feature type="chain" id="PRO_0000100501" description="Phosphoribosylformylglycinamidine synthase subunit PurL">
    <location>
        <begin position="1"/>
        <end position="603"/>
    </location>
</feature>
<feature type="active site" evidence="1 3">
    <location>
        <position position="32"/>
    </location>
</feature>
<feature type="active site" description="Proton acceptor" evidence="5">
    <location>
        <position position="72"/>
    </location>
</feature>
<feature type="binding site" evidence="3 4">
    <location>
        <position position="35"/>
    </location>
    <ligand>
        <name>ATP</name>
        <dbReference type="ChEBI" id="CHEBI:30616"/>
        <label>1</label>
        <note>substrate</note>
    </ligand>
</feature>
<feature type="binding site" evidence="3 4">
    <location>
        <position position="68"/>
    </location>
    <ligand>
        <name>ATP</name>
        <dbReference type="ChEBI" id="CHEBI:30616"/>
        <label>1</label>
        <note>substrate</note>
    </ligand>
</feature>
<feature type="binding site" evidence="1 3">
    <location>
        <position position="70"/>
    </location>
    <ligand>
        <name>Mg(2+)</name>
        <dbReference type="ChEBI" id="CHEBI:18420"/>
        <label>1</label>
    </ligand>
</feature>
<feature type="binding site">
    <location>
        <begin position="71"/>
        <end position="74"/>
    </location>
    <ligand>
        <name>substrate</name>
    </ligand>
</feature>
<feature type="binding site">
    <location>
        <position position="93"/>
    </location>
    <ligand>
        <name>substrate</name>
    </ligand>
</feature>
<feature type="binding site" evidence="1 3">
    <location>
        <position position="94"/>
    </location>
    <ligand>
        <name>Mg(2+)</name>
        <dbReference type="ChEBI" id="CHEBI:18420"/>
        <label>2</label>
    </ligand>
</feature>
<feature type="binding site" evidence="5">
    <location>
        <position position="107"/>
    </location>
    <ligand>
        <name>ATP</name>
        <dbReference type="ChEBI" id="CHEBI:30616"/>
        <label>2</label>
        <note>auxiliary</note>
    </ligand>
</feature>
<feature type="binding site">
    <location>
        <begin position="136"/>
        <end position="139"/>
    </location>
    <ligand>
        <name>ATP</name>
        <dbReference type="ChEBI" id="CHEBI:30616"/>
        <label>2</label>
        <note>auxiliary</note>
    </ligand>
</feature>
<feature type="binding site">
    <location>
        <position position="189"/>
    </location>
    <ligand>
        <name>substrate</name>
    </ligand>
</feature>
<feature type="binding site">
    <location>
        <position position="208"/>
    </location>
    <ligand>
        <name>substrate</name>
    </ligand>
</feature>
<feature type="binding site" evidence="1 3">
    <location>
        <position position="236"/>
    </location>
    <ligand>
        <name>Mg(2+)</name>
        <dbReference type="ChEBI" id="CHEBI:18420"/>
        <label>2</label>
    </ligand>
</feature>
<feature type="binding site">
    <location>
        <begin position="280"/>
        <end position="282"/>
    </location>
    <ligand>
        <name>substrate</name>
    </ligand>
</feature>
<feature type="binding site" evidence="5">
    <location>
        <position position="388"/>
    </location>
    <ligand>
        <name>ATP</name>
        <dbReference type="ChEBI" id="CHEBI:30616"/>
        <label>2</label>
        <note>auxiliary</note>
    </ligand>
</feature>
<feature type="binding site" evidence="5">
    <location>
        <position position="429"/>
    </location>
    <ligand>
        <name>ATP</name>
        <dbReference type="ChEBI" id="CHEBI:30616"/>
        <label>2</label>
        <note>auxiliary</note>
    </ligand>
</feature>
<feature type="binding site" evidence="3 4">
    <location>
        <position position="442"/>
    </location>
    <ligand>
        <name>ATP</name>
        <dbReference type="ChEBI" id="CHEBI:30616"/>
        <label>1</label>
        <note>substrate</note>
    </ligand>
</feature>
<feature type="binding site" evidence="1 3 4">
    <location>
        <position position="477"/>
    </location>
    <ligand>
        <name>ATP</name>
        <dbReference type="ChEBI" id="CHEBI:30616"/>
        <label>1</label>
        <note>substrate</note>
    </ligand>
</feature>
<feature type="binding site" evidence="1 3">
    <location>
        <position position="478"/>
    </location>
    <ligand>
        <name>Mg(2+)</name>
        <dbReference type="ChEBI" id="CHEBI:18420"/>
        <label>1</label>
    </ligand>
</feature>
<feature type="binding site">
    <location>
        <position position="480"/>
    </location>
    <ligand>
        <name>substrate</name>
    </ligand>
</feature>
<feature type="binding site" evidence="5">
    <location>
        <position position="549"/>
    </location>
    <ligand>
        <name>ATP</name>
        <dbReference type="ChEBI" id="CHEBI:30616"/>
        <label>2</label>
        <note>auxiliary</note>
    </ligand>
</feature>
<feature type="binding site" evidence="5">
    <location>
        <position position="556"/>
    </location>
    <ligand>
        <name>ATP</name>
        <dbReference type="ChEBI" id="CHEBI:30616"/>
        <label>2</label>
        <note>auxiliary</note>
    </ligand>
</feature>
<feature type="mutagenesis site" description="Loss of FGAM synthase activity." evidence="3">
    <original>H</original>
    <variation>A</variation>
    <location>
        <position position="32"/>
    </location>
</feature>
<feature type="mutagenesis site" description="Loss of FGAM synthase activity." evidence="3">
    <original>H</original>
    <variation>Q</variation>
    <location>
        <position position="32"/>
    </location>
</feature>
<feature type="mutagenesis site" description="Strong decrease of the binding affinity and 20-fold decrease of the catalytic efficiency for FGAR. It has no effect on the ATP binding site, however it affects binding of FGAR." evidence="3">
    <original>H</original>
    <variation>A</variation>
    <location>
        <position position="72"/>
    </location>
</feature>
<feature type="mutagenesis site" description="200-fold decrease of the catalytic efficiency for FGAR. It has no effect on the ATP binding site, however it affects binding of FGAR." evidence="3">
    <original>H</original>
    <variation>Q</variation>
    <location>
        <position position="72"/>
    </location>
</feature>
<feature type="helix" evidence="6">
    <location>
        <begin position="3"/>
        <end position="13"/>
    </location>
</feature>
<feature type="helix" evidence="6">
    <location>
        <begin position="19"/>
        <end position="28"/>
    </location>
</feature>
<feature type="helix" evidence="6">
    <location>
        <begin position="31"/>
        <end position="34"/>
    </location>
</feature>
<feature type="turn" evidence="6">
    <location>
        <begin position="36"/>
        <end position="38"/>
    </location>
</feature>
<feature type="helix" evidence="6">
    <location>
        <begin position="39"/>
        <end position="43"/>
    </location>
</feature>
<feature type="strand" evidence="6">
    <location>
        <begin position="51"/>
        <end position="53"/>
    </location>
</feature>
<feature type="strand" evidence="6">
    <location>
        <begin position="56"/>
        <end position="71"/>
    </location>
</feature>
<feature type="helix" evidence="6">
    <location>
        <begin position="73"/>
        <end position="78"/>
    </location>
</feature>
<feature type="helix" evidence="6">
    <location>
        <begin position="80"/>
        <end position="97"/>
    </location>
</feature>
<feature type="strand" evidence="6">
    <location>
        <begin position="101"/>
        <end position="113"/>
    </location>
</feature>
<feature type="helix" evidence="6">
    <location>
        <begin position="116"/>
        <end position="129"/>
    </location>
</feature>
<feature type="strand" evidence="6">
    <location>
        <begin position="133"/>
        <end position="140"/>
    </location>
</feature>
<feature type="helix" evidence="6">
    <location>
        <begin position="142"/>
        <end position="144"/>
    </location>
</feature>
<feature type="strand" evidence="8">
    <location>
        <begin position="145"/>
        <end position="147"/>
    </location>
</feature>
<feature type="strand" evidence="6">
    <location>
        <begin position="149"/>
        <end position="159"/>
    </location>
</feature>
<feature type="helix" evidence="10">
    <location>
        <begin position="160"/>
        <end position="162"/>
    </location>
</feature>
<feature type="strand" evidence="7">
    <location>
        <begin position="165"/>
        <end position="167"/>
    </location>
</feature>
<feature type="strand" evidence="10">
    <location>
        <begin position="170"/>
        <end position="172"/>
    </location>
</feature>
<feature type="strand" evidence="6">
    <location>
        <begin position="174"/>
        <end position="180"/>
    </location>
</feature>
<feature type="turn" evidence="8">
    <location>
        <begin position="185"/>
        <end position="188"/>
    </location>
</feature>
<feature type="helix" evidence="8">
    <location>
        <begin position="189"/>
        <end position="192"/>
    </location>
</feature>
<feature type="helix" evidence="6">
    <location>
        <begin position="204"/>
        <end position="206"/>
    </location>
</feature>
<feature type="helix" evidence="6">
    <location>
        <begin position="212"/>
        <end position="228"/>
    </location>
</feature>
<feature type="strand" evidence="6">
    <location>
        <begin position="232"/>
        <end position="236"/>
    </location>
</feature>
<feature type="helix" evidence="6">
    <location>
        <begin position="241"/>
        <end position="252"/>
    </location>
</feature>
<feature type="strand" evidence="6">
    <location>
        <begin position="256"/>
        <end position="260"/>
    </location>
</feature>
<feature type="helix" evidence="6">
    <location>
        <begin position="261"/>
        <end position="263"/>
    </location>
</feature>
<feature type="strand" evidence="6">
    <location>
        <begin position="266"/>
        <end position="268"/>
    </location>
</feature>
<feature type="helix" evidence="6">
    <location>
        <begin position="273"/>
        <end position="278"/>
    </location>
</feature>
<feature type="strand" evidence="6">
    <location>
        <begin position="282"/>
        <end position="289"/>
    </location>
</feature>
<feature type="helix" evidence="6">
    <location>
        <begin position="291"/>
        <end position="293"/>
    </location>
</feature>
<feature type="helix" evidence="6">
    <location>
        <begin position="294"/>
        <end position="303"/>
    </location>
</feature>
<feature type="strand" evidence="6">
    <location>
        <begin position="307"/>
        <end position="317"/>
    </location>
</feature>
<feature type="strand" evidence="6">
    <location>
        <begin position="319"/>
        <end position="324"/>
    </location>
</feature>
<feature type="strand" evidence="6">
    <location>
        <begin position="327"/>
        <end position="333"/>
    </location>
</feature>
<feature type="helix" evidence="6">
    <location>
        <begin position="334"/>
        <end position="338"/>
    </location>
</feature>
<feature type="helix" evidence="6">
    <location>
        <begin position="366"/>
        <end position="371"/>
    </location>
</feature>
<feature type="turn" evidence="6">
    <location>
        <begin position="372"/>
        <end position="374"/>
    </location>
</feature>
<feature type="strand" evidence="6">
    <location>
        <begin position="381"/>
        <end position="383"/>
    </location>
</feature>
<feature type="helix" evidence="6">
    <location>
        <begin position="385"/>
        <end position="387"/>
    </location>
</feature>
<feature type="strand" evidence="6">
    <location>
        <begin position="390"/>
        <end position="395"/>
    </location>
</feature>
<feature type="strand" evidence="6">
    <location>
        <begin position="398"/>
        <end position="405"/>
    </location>
</feature>
<feature type="helix" evidence="6">
    <location>
        <begin position="408"/>
        <end position="411"/>
    </location>
</feature>
<feature type="helix" evidence="6">
    <location>
        <begin position="415"/>
        <end position="432"/>
    </location>
</feature>
<feature type="strand" evidence="6">
    <location>
        <begin position="436"/>
        <end position="445"/>
    </location>
</feature>
<feature type="turn" evidence="6">
    <location>
        <begin position="449"/>
        <end position="451"/>
    </location>
</feature>
<feature type="helix" evidence="6">
    <location>
        <begin position="453"/>
        <end position="470"/>
    </location>
</feature>
<feature type="strand" evidence="6">
    <location>
        <begin position="474"/>
        <end position="480"/>
    </location>
</feature>
<feature type="strand" evidence="6">
    <location>
        <begin position="493"/>
        <end position="502"/>
    </location>
</feature>
<feature type="helix" evidence="6">
    <location>
        <begin position="504"/>
        <end position="506"/>
    </location>
</feature>
<feature type="strand" evidence="6">
    <location>
        <begin position="512"/>
        <end position="522"/>
    </location>
</feature>
<feature type="helix" evidence="6">
    <location>
        <begin position="525"/>
        <end position="527"/>
    </location>
</feature>
<feature type="helix" evidence="6">
    <location>
        <begin position="528"/>
        <end position="540"/>
    </location>
</feature>
<feature type="strand" evidence="6">
    <location>
        <begin position="544"/>
        <end position="546"/>
    </location>
</feature>
<feature type="strand" evidence="9">
    <location>
        <begin position="549"/>
        <end position="552"/>
    </location>
</feature>
<feature type="helix" evidence="6">
    <location>
        <begin position="554"/>
        <end position="562"/>
    </location>
</feature>
<feature type="strand" evidence="6">
    <location>
        <begin position="566"/>
        <end position="569"/>
    </location>
</feature>
<feature type="strand" evidence="6">
    <location>
        <begin position="579"/>
        <end position="587"/>
    </location>
</feature>
<feature type="strand" evidence="8">
    <location>
        <begin position="591"/>
        <end position="593"/>
    </location>
</feature>
<feature type="strand" evidence="6">
    <location>
        <begin position="595"/>
        <end position="602"/>
    </location>
</feature>
<accession>Q9X0X3</accession>
<evidence type="ECO:0000255" key="1">
    <source>
        <dbReference type="HAMAP-Rule" id="MF_00420"/>
    </source>
</evidence>
<evidence type="ECO:0000269" key="2">
    <source>
    </source>
</evidence>
<evidence type="ECO:0000269" key="3">
    <source>
    </source>
</evidence>
<evidence type="ECO:0000269" key="4">
    <source>
    </source>
</evidence>
<evidence type="ECO:0000305" key="5">
    <source>
    </source>
</evidence>
<evidence type="ECO:0007829" key="6">
    <source>
        <dbReference type="PDB" id="1VK3"/>
    </source>
</evidence>
<evidence type="ECO:0007829" key="7">
    <source>
        <dbReference type="PDB" id="2HRY"/>
    </source>
</evidence>
<evidence type="ECO:0007829" key="8">
    <source>
        <dbReference type="PDB" id="2HS3"/>
    </source>
</evidence>
<evidence type="ECO:0007829" key="9">
    <source>
        <dbReference type="PDB" id="2HS4"/>
    </source>
</evidence>
<evidence type="ECO:0007829" key="10">
    <source>
        <dbReference type="PDB" id="3D54"/>
    </source>
</evidence>
<name>PURL_THEMA</name>
<reference key="1">
    <citation type="journal article" date="1999" name="Nature">
        <title>Evidence for lateral gene transfer between Archaea and Bacteria from genome sequence of Thermotoga maritima.</title>
        <authorList>
            <person name="Nelson K.E."/>
            <person name="Clayton R.A."/>
            <person name="Gill S.R."/>
            <person name="Gwinn M.L."/>
            <person name="Dodson R.J."/>
            <person name="Haft D.H."/>
            <person name="Hickey E.K."/>
            <person name="Peterson J.D."/>
            <person name="Nelson W.C."/>
            <person name="Ketchum K.A."/>
            <person name="McDonald L.A."/>
            <person name="Utterback T.R."/>
            <person name="Malek J.A."/>
            <person name="Linher K.D."/>
            <person name="Garrett M.M."/>
            <person name="Stewart A.M."/>
            <person name="Cotton M.D."/>
            <person name="Pratt M.S."/>
            <person name="Phillips C.A."/>
            <person name="Richardson D.L."/>
            <person name="Heidelberg J.F."/>
            <person name="Sutton G.G."/>
            <person name="Fleischmann R.D."/>
            <person name="Eisen J.A."/>
            <person name="White O."/>
            <person name="Salzberg S.L."/>
            <person name="Smith H.O."/>
            <person name="Venter J.C."/>
            <person name="Fraser C.M."/>
        </authorList>
    </citation>
    <scope>NUCLEOTIDE SEQUENCE [LARGE SCALE GENOMIC DNA]</scope>
    <source>
        <strain>ATCC 43589 / DSM 3109 / JCM 10099 / NBRC 100826 / MSB8</strain>
    </source>
</reference>
<reference key="2">
    <citation type="journal article" date="2006" name="Biochemistry">
        <title>Complexed structures of formylglycinamide ribonucleotide amidotransferase from Thermotoga maritima describe a novel ATP binding protein superfamily.</title>
        <authorList>
            <person name="Morar M."/>
            <person name="Anand R."/>
            <person name="Hoskins A.A."/>
            <person name="Stubbe J."/>
            <person name="Ealick S.E."/>
        </authorList>
    </citation>
    <scope>X-RAY CRYSTALLOGRAPHY (2.30 ANGSTROMS) OF WILD-TYPE AND MUTANT ALA-72 IN COMPLEX WITH SUBSTRATE ANALOGS; ATP AND MAGNESIUM</scope>
    <scope>FUNCTION</scope>
    <scope>CATALYTIC ACTIVITY</scope>
    <scope>MUTAGENESIS OF HIS-32 AND HIS-72</scope>
    <scope>ACTIVE SITE</scope>
    <scope>BIOPHYSICOCHEMICAL PROPERTIES</scope>
    <scope>SUBUNIT</scope>
</reference>
<reference key="3">
    <citation type="journal article" date="2006" name="Proteins">
        <title>Crystal structure of phosphoribosylformylglycinamidine synthase II (smPurL) from Thermotoga maritima at 2.15 A resolution.</title>
        <authorList>
            <person name="Mathews I.I."/>
            <person name="Krishna S.S."/>
            <person name="Schwarzenbacher R."/>
            <person name="McMullan D."/>
            <person name="Abdubek P."/>
            <person name="Ambing E."/>
            <person name="Canaves J.M."/>
            <person name="Chiu H.J."/>
            <person name="Deacon A.M."/>
            <person name="DiDonato M."/>
            <person name="Elsliger M.A."/>
            <person name="Godzik A."/>
            <person name="Grittini C."/>
            <person name="Grzechnik S.K."/>
            <person name="Hale J."/>
            <person name="Hampton E."/>
            <person name="Han G.W."/>
            <person name="Haugen J."/>
            <person name="Jaroszewski L."/>
            <person name="Klock H.E."/>
            <person name="Koesema E."/>
            <person name="Kreusch A."/>
            <person name="Kuhn P."/>
            <person name="Lesley S.A."/>
            <person name="Levin I."/>
            <person name="Miller M.D."/>
            <person name="Moy K."/>
            <person name="Nigoghossian E."/>
            <person name="Paulsen J."/>
            <person name="Quijano K."/>
            <person name="Reyes R."/>
            <person name="Spraggon G."/>
            <person name="Stevens R.C."/>
            <person name="van den Bedem H."/>
            <person name="Velasquez J."/>
            <person name="White A."/>
            <person name="Wolf G."/>
            <person name="Xu Q."/>
            <person name="Hodgson K.O."/>
            <person name="Wooley J."/>
            <person name="Wilson I.A."/>
        </authorList>
    </citation>
    <scope>X-RAY CRYSTALLOGRAPHY (2.15 ANGSTROMS)</scope>
    <scope>SUBUNIT</scope>
    <source>
        <strain>ATCC 43589 / DSM 3109 / JCM 10099 / NBRC 100826 / MSB8</strain>
    </source>
</reference>
<reference key="4">
    <citation type="journal article" date="2008" name="Biochemistry">
        <title>Formylglycinamide ribonucleotide amidotransferase from Thermotoga maritima: structural insights into complex formation.</title>
        <authorList>
            <person name="Morar M."/>
            <person name="Hoskins A.A."/>
            <person name="Stubbe J."/>
            <person name="Ealick S.E."/>
        </authorList>
    </citation>
    <scope>X-RAY CRYSTALLOGRAPHY (3.50 ANGSTROMS) IN COMPLEX WITH ATP</scope>
    <scope>FUNCTION</scope>
    <scope>SUBUNIT</scope>
</reference>
<organism>
    <name type="scientific">Thermotoga maritima (strain ATCC 43589 / DSM 3109 / JCM 10099 / NBRC 100826 / MSB8)</name>
    <dbReference type="NCBI Taxonomy" id="243274"/>
    <lineage>
        <taxon>Bacteria</taxon>
        <taxon>Thermotogati</taxon>
        <taxon>Thermotogota</taxon>
        <taxon>Thermotogae</taxon>
        <taxon>Thermotogales</taxon>
        <taxon>Thermotogaceae</taxon>
        <taxon>Thermotoga</taxon>
    </lineage>
</organism>
<proteinExistence type="evidence at protein level"/>
<protein>
    <recommendedName>
        <fullName evidence="1">Phosphoribosylformylglycinamidine synthase subunit PurL</fullName>
        <shortName evidence="1">FGAM synthase</shortName>
        <ecNumber evidence="1">6.3.5.3</ecNumber>
    </recommendedName>
    <alternativeName>
        <fullName evidence="1">Formylglycinamide ribonucleotide amidotransferase subunit II</fullName>
        <shortName evidence="1">FGAR amidotransferase II</shortName>
        <shortName evidence="1">FGAR-AT II</shortName>
    </alternativeName>
    <alternativeName>
        <fullName evidence="1">Glutamine amidotransferase PurL</fullName>
    </alternativeName>
    <alternativeName>
        <fullName evidence="1">Phosphoribosylformylglycinamidine synthase subunit II</fullName>
    </alternativeName>
</protein>
<comment type="function">
    <text evidence="1 3 4">Part of the phosphoribosylformylglycinamidine synthase complex involved in the purines biosynthetic pathway. Catalyzes the ATP-dependent conversion of formylglycinamide ribonucleotide (FGAR) and glutamine to yield formylglycinamidine ribonucleotide (FGAM) and glutamate. The FGAM synthase complex is composed of three subunits. PurQ produces an ammonia molecule by converting glutamine to glutamate. PurL transfers the ammonia molecule to FGAR to form FGAM in an ATP-dependent manner. PurS interacts with PurQ and PurL and is thought to assist in the transfer of the ammonia molecule from PurQ to PurL.</text>
</comment>
<comment type="catalytic activity">
    <reaction evidence="1 3">
        <text>N(2)-formyl-N(1)-(5-phospho-beta-D-ribosyl)glycinamide + L-glutamine + ATP + H2O = 2-formamido-N(1)-(5-O-phospho-beta-D-ribosyl)acetamidine + L-glutamate + ADP + phosphate + H(+)</text>
        <dbReference type="Rhea" id="RHEA:17129"/>
        <dbReference type="ChEBI" id="CHEBI:15377"/>
        <dbReference type="ChEBI" id="CHEBI:15378"/>
        <dbReference type="ChEBI" id="CHEBI:29985"/>
        <dbReference type="ChEBI" id="CHEBI:30616"/>
        <dbReference type="ChEBI" id="CHEBI:43474"/>
        <dbReference type="ChEBI" id="CHEBI:58359"/>
        <dbReference type="ChEBI" id="CHEBI:147286"/>
        <dbReference type="ChEBI" id="CHEBI:147287"/>
        <dbReference type="ChEBI" id="CHEBI:456216"/>
        <dbReference type="EC" id="6.3.5.3"/>
    </reaction>
</comment>
<comment type="biophysicochemical properties">
    <kinetics>
        <KM evidence="3">0.26 mM for ATP (at pH 8 and 37 degrees Celsius)</KM>
        <KM evidence="3">1.05 mM for FGAR (at pH 8 and 37 degrees Celsius)</KM>
        <KM evidence="3">158 mM for NH(4)Cl (at pH 8 and 37 degrees Celsius)</KM>
        <text>kcat is 0.39 sec(-1) for FGAM synthase activity with NH(4)Cl as substrate (at pH 8 and 37 degrees Celsius). kcat is 0.40 sec(-1) for FGAM synthase activity with FGAR as substrate (at pH 8 and 37 degrees Celsius). kcat is 0.41 sec(-1) for FGAM synthase activity with ATP as substrate (at pH 8 and 37 degrees Celsius).</text>
    </kinetics>
</comment>
<comment type="pathway">
    <text evidence="1">Purine metabolism; IMP biosynthesis via de novo pathway; 5-amino-1-(5-phospho-D-ribosyl)imidazole from N(2)-formyl-N(1)-(5-phospho-D-ribosyl)glycinamide: step 1/2.</text>
</comment>
<comment type="subunit">
    <text evidence="1 2 3 4">Monomer. Part of the FGAM synthase complex composed of 1 PurL, 1 PurQ and 2 PurS subunits.</text>
</comment>
<comment type="subcellular location">
    <subcellularLocation>
        <location evidence="1">Cytoplasm</location>
    </subcellularLocation>
</comment>
<comment type="miscellaneous">
    <text evidence="5">Purl possesses an auxiliary ATP Binding region which is not catalytic, but able to bind additional ATP. The conformational changes associated with its binding could have a regulatory role in formation of the PurLSQ complex (PubMed:17154526).</text>
</comment>
<comment type="similarity">
    <text evidence="1">Belongs to the FGAMS family.</text>
</comment>